<gene>
    <name evidence="10" type="primary">cadB</name>
    <name type="ordered locus">b4132</name>
    <name type="ordered locus">JW4093</name>
</gene>
<keyword id="KW-0029">Amino-acid transport</keyword>
<keyword id="KW-0050">Antiport</keyword>
<keyword id="KW-0997">Cell inner membrane</keyword>
<keyword id="KW-1003">Cell membrane</keyword>
<keyword id="KW-0472">Membrane</keyword>
<keyword id="KW-1185">Reference proteome</keyword>
<keyword id="KW-0769">Symport</keyword>
<keyword id="KW-0812">Transmembrane</keyword>
<keyword id="KW-1133">Transmembrane helix</keyword>
<keyword id="KW-0813">Transport</keyword>
<name>CADB_ECOLI</name>
<evidence type="ECO:0000255" key="1"/>
<evidence type="ECO:0000269" key="2">
    <source>
    </source>
</evidence>
<evidence type="ECO:0000269" key="3">
    <source>
    </source>
</evidence>
<evidence type="ECO:0000269" key="4">
    <source>
    </source>
</evidence>
<evidence type="ECO:0000269" key="5">
    <source>
    </source>
</evidence>
<evidence type="ECO:0000269" key="6">
    <source>
    </source>
</evidence>
<evidence type="ECO:0000269" key="7">
    <source>
    </source>
</evidence>
<evidence type="ECO:0000269" key="8">
    <source>
    </source>
</evidence>
<evidence type="ECO:0000269" key="9">
    <source>
    </source>
</evidence>
<evidence type="ECO:0000303" key="10">
    <source>
    </source>
</evidence>
<evidence type="ECO:0000305" key="11"/>
<evidence type="ECO:0000305" key="12">
    <source>
    </source>
</evidence>
<evidence type="ECO:0000305" key="13">
    <source>
    </source>
</evidence>
<sequence length="444" mass="46665">MSSAKKIGLFACTGVVAGNMMGSGIALLPANLASIGGIAIWGWIISIIGAMSLAYVYARLATKNPQQGGPIAYAGEISPAFGFQTGVLYYHANWIGNLAIGITAVSYLSTFFPVLNDPVPAGIACIAIVWVFTFVNMLGGTWVSRLTTIGLVLVLIPVVMTAIVGWHWFDAATYAANWNTADTTDGHAIIKSILLCLWAFVGVESAAVSTGMVKNPKRTVPLATMLGTGLAGIVYIAATQVLSGMYPSSVMAASGAPFAISASTILGNWAAPLVSAFTAFACLTSLGSWMMLVGQAGVRAANDGNFPKVYGEVDSNGIPKKGLLLAAVKMTALMILITLMNSAGGKASDLFGELTGIAVLLTMLPYFYSCVDLIRFEGVNIRNFVSLICSVLGCVFCFIALMGASSFELAGTFIVSLIILMFYARKMHERQSHSMDNHTASNAH</sequence>
<organism>
    <name type="scientific">Escherichia coli (strain K12)</name>
    <dbReference type="NCBI Taxonomy" id="83333"/>
    <lineage>
        <taxon>Bacteria</taxon>
        <taxon>Pseudomonadati</taxon>
        <taxon>Pseudomonadota</taxon>
        <taxon>Gammaproteobacteria</taxon>
        <taxon>Enterobacterales</taxon>
        <taxon>Enterobacteriaceae</taxon>
        <taxon>Escherichia</taxon>
    </lineage>
</organism>
<accession>P0AAE8</accession>
<accession>P23891</accession>
<accession>Q2M6H1</accession>
<feature type="chain" id="PRO_0000054244" description="Cadaverine/lysine antiporter">
    <location>
        <begin position="1"/>
        <end position="444"/>
    </location>
</feature>
<feature type="topological domain" description="Cytoplasmic" evidence="13">
    <location>
        <begin position="1"/>
        <end position="6"/>
    </location>
</feature>
<feature type="transmembrane region" description="Helical" evidence="1">
    <location>
        <begin position="7"/>
        <end position="27"/>
    </location>
</feature>
<feature type="topological domain" description="Periplasmic" evidence="13">
    <location>
        <begin position="28"/>
        <end position="34"/>
    </location>
</feature>
<feature type="transmembrane region" description="Helical" evidence="1">
    <location>
        <begin position="35"/>
        <end position="55"/>
    </location>
</feature>
<feature type="topological domain" description="Cytoplasmic" evidence="13">
    <location>
        <begin position="56"/>
        <end position="94"/>
    </location>
</feature>
<feature type="transmembrane region" description="Helical" evidence="1">
    <location>
        <begin position="95"/>
        <end position="115"/>
    </location>
</feature>
<feature type="topological domain" description="Periplasmic" evidence="13">
    <location>
        <begin position="116"/>
        <end position="122"/>
    </location>
</feature>
<feature type="transmembrane region" description="Helical" evidence="1">
    <location>
        <begin position="123"/>
        <end position="143"/>
    </location>
</feature>
<feature type="topological domain" description="Cytoplasmic" evidence="13">
    <location>
        <begin position="144"/>
        <end position="148"/>
    </location>
</feature>
<feature type="transmembrane region" description="Helical" evidence="1">
    <location>
        <begin position="149"/>
        <end position="169"/>
    </location>
</feature>
<feature type="topological domain" description="Periplasmic" evidence="13">
    <location>
        <begin position="170"/>
        <end position="192"/>
    </location>
</feature>
<feature type="transmembrane region" description="Helical" evidence="1">
    <location>
        <begin position="193"/>
        <end position="213"/>
    </location>
</feature>
<feature type="topological domain" description="Cytoplasmic" evidence="13">
    <location>
        <begin position="214"/>
        <end position="221"/>
    </location>
</feature>
<feature type="transmembrane region" description="Helical" evidence="1">
    <location>
        <begin position="222"/>
        <end position="242"/>
    </location>
</feature>
<feature type="topological domain" description="Periplasmic" evidence="13">
    <location>
        <begin position="243"/>
        <end position="272"/>
    </location>
</feature>
<feature type="transmembrane region" description="Helical" evidence="1">
    <location>
        <begin position="273"/>
        <end position="293"/>
    </location>
</feature>
<feature type="topological domain" description="Cytoplasmic" evidence="13">
    <location>
        <begin position="294"/>
        <end position="322"/>
    </location>
</feature>
<feature type="transmembrane region" description="Helical" evidence="1">
    <location>
        <begin position="323"/>
        <end position="343"/>
    </location>
</feature>
<feature type="topological domain" description="Periplasmic" evidence="13">
    <location>
        <begin position="344"/>
        <end position="353"/>
    </location>
</feature>
<feature type="transmembrane region" description="Helical" evidence="1">
    <location>
        <begin position="354"/>
        <end position="374"/>
    </location>
</feature>
<feature type="topological domain" description="Cytoplasmic" evidence="13">
    <location>
        <begin position="375"/>
        <end position="383"/>
    </location>
</feature>
<feature type="transmembrane region" description="Helical" evidence="1">
    <location>
        <begin position="384"/>
        <end position="404"/>
    </location>
</feature>
<feature type="transmembrane region" description="Helical" evidence="1">
    <location>
        <begin position="405"/>
        <end position="425"/>
    </location>
</feature>
<feature type="topological domain" description="Cytoplasmic" evidence="5 13">
    <location>
        <begin position="426"/>
        <end position="444"/>
    </location>
</feature>
<feature type="mutagenesis site" description="Does not affect cadaverine excretion and cadaverine uptake." evidence="7">
    <original>C</original>
    <variation>S</variation>
    <location>
        <position position="12"/>
    </location>
</feature>
<feature type="mutagenesis site" description="Moderate decrease in cadaverine uptake." evidence="7">
    <original>W</original>
    <variation>L</variation>
    <location>
        <position position="41"/>
    </location>
</feature>
<feature type="mutagenesis site" description="Strong decrease in cadaverine uptake." evidence="7">
    <original>W</original>
    <variation>L</variation>
    <location>
        <position position="43"/>
    </location>
</feature>
<feature type="mutagenesis site" description="Moderate decrease in both cadaverine excretion and cadaverine uptake." evidence="7">
    <original>Y</original>
    <variation>L</variation>
    <location>
        <position position="55"/>
    </location>
</feature>
<feature type="mutagenesis site" description="Strong decrease in cadaverine uptake." evidence="7">
    <original>Y</original>
    <variation>L</variation>
    <location>
        <position position="57"/>
    </location>
</feature>
<feature type="mutagenesis site" description="Strong decrease in both cadaverine excretion and cadaverine uptake. 9-fold increase in Km for cadaverine for cadaverine uptake and 10-fold increase in Km for cadaverine for cadaverine excretion." evidence="7">
    <original>Y</original>
    <variation>L</variation>
    <location>
        <position position="73"/>
    </location>
</feature>
<feature type="mutagenesis site" description="Moderate decrease in both cadaverine excretion and cadaverine uptake." evidence="7">
    <original>E</original>
    <variation>Q</variation>
    <location>
        <position position="76"/>
    </location>
</feature>
<feature type="mutagenesis site" description="Strong decrease in both cadaverine excretion and cadaverine uptake. 10-fold increase in Km for cadaverine for cadaverine uptake and 5-fold increase in Km for cadaverine for cadaverine excretion." evidence="7">
    <original>Y</original>
    <variation>L</variation>
    <location>
        <position position="89"/>
    </location>
</feature>
<feature type="mutagenesis site" description="Strong decrease in both cadaverine excretion and cadaverine uptake." evidence="7">
    <original>Y</original>
    <variation>L</variation>
    <location>
        <position position="90"/>
    </location>
</feature>
<feature type="mutagenesis site" description="Strong decrease in cadaverine uptake." evidence="7">
    <original>Y</original>
    <variation>L</variation>
    <location>
        <position position="107"/>
    </location>
</feature>
<feature type="mutagenesis site" description="Does not affect cadaverine excretion and cadaverine uptake." evidence="7">
    <original>C</original>
    <variation>S</variation>
    <location>
        <position position="125"/>
    </location>
</feature>
<feature type="mutagenesis site" description="Moderate decrease in cadaverine uptake." evidence="7">
    <original>Y</original>
    <variation>L</variation>
    <location>
        <position position="174"/>
    </location>
</feature>
<feature type="mutagenesis site" description="Moderate decrease in cadaverine uptake." evidence="7">
    <original>D</original>
    <variation>N</variation>
    <location>
        <position position="185"/>
    </location>
</feature>
<feature type="mutagenesis site" description="Moderate decrease in both cadaverine excretion and cadaverine uptake." evidence="7">
    <original>C</original>
    <variation>S</variation>
    <location>
        <position position="196"/>
    </location>
</feature>
<feature type="mutagenesis site" description="Strong decrease in both cadaverine excretion and cadaverine uptake. 22-fold increase in Km for cadaverine for cadaverine uptake and 6-fold increase in Km for cadaverine for cadaverine excretion." evidence="7">
    <original>E</original>
    <variation>Q</variation>
    <location>
        <position position="204"/>
    </location>
</feature>
<feature type="mutagenesis site" description="Strong decrease in both cadaverine excretion and cadaverine uptake. 23-fold increase in Km for cadaverine for cadaverine uptake and 7-fold increase in Km for cadaverine for cadaverine excretion." evidence="7">
    <original>Y</original>
    <variation>L</variation>
    <location>
        <position position="235"/>
    </location>
</feature>
<feature type="mutagenesis site" description="Moderate decrease in both cadaverine excretion and cadaverine uptake." evidence="7">
    <original>Y</original>
    <variation>L</variation>
    <location>
        <position position="246"/>
    </location>
</feature>
<feature type="mutagenesis site" description="Moderate decrease in both cadaverine excretion and cadaverine uptake." evidence="7">
    <original>C</original>
    <variation>S</variation>
    <location>
        <position position="282"/>
    </location>
</feature>
<feature type="mutagenesis site" description="Strong decrease in cadaverine excretion but not in cadaverine uptake." evidence="7">
    <original>R</original>
    <variation>A</variation>
    <location>
        <position position="299"/>
    </location>
</feature>
<feature type="mutagenesis site" description="Strong decrease in both cadaverine excretion and cadaverine uptake. 24-fold increase in Km for cadaverine for cadaverine uptake and 9-fold increase in Km for cadaverine for cadaverine excretion." evidence="7">
    <original>D</original>
    <variation>N</variation>
    <location>
        <position position="303"/>
    </location>
</feature>
<feature type="mutagenesis site" description="Moderate decrease in both cadaverine excretion and cadaverine uptake." evidence="7">
    <original>Y</original>
    <variation>L</variation>
    <location>
        <position position="310"/>
    </location>
</feature>
<feature type="mutagenesis site" description="Strong decrease in cadaverine uptake. 15-fold increase in Km for cadaverine for cadaverine uptake." evidence="7">
    <original>Y</original>
    <variation>L</variation>
    <location>
        <position position="366"/>
    </location>
</feature>
<feature type="mutagenesis site" description="Strong decrease in cadaverine uptake." evidence="7">
    <original>Y</original>
    <variation>L</variation>
    <location>
        <position position="368"/>
    </location>
</feature>
<feature type="mutagenesis site" description="Strong decrease in both cadaverine excretion and cadaverine uptake." evidence="7">
    <original>C</original>
    <variation>S</variation>
    <location>
        <position position="370"/>
    </location>
</feature>
<feature type="mutagenesis site" description="Moderate decrease in both cadaverine excretion and cadaverine uptake." evidence="7">
    <original>E</original>
    <variation>Q</variation>
    <location>
        <position position="377"/>
    </location>
</feature>
<feature type="mutagenesis site" description="Moderate decrease in both cadaverine excretion and cadaverine uptake." evidence="7">
    <original>C</original>
    <variation>S</variation>
    <location>
        <position position="389"/>
    </location>
</feature>
<feature type="mutagenesis site" description="Moderate decrease in both cadaverine excretion and cadaverine uptake." evidence="7">
    <original>C</original>
    <variation>S</variation>
    <location>
        <position position="394"/>
    </location>
</feature>
<feature type="mutagenesis site" description="Moderate decrease in both cadaverine excretion and cadaverine uptake." evidence="7">
    <original>C</original>
    <variation>S</variation>
    <location>
        <position position="397"/>
    </location>
</feature>
<feature type="mutagenesis site" description="Moderate decrease in cadaverine uptake." evidence="7">
    <original>E</original>
    <variation>Q</variation>
    <location>
        <position position="408"/>
    </location>
</feature>
<feature type="mutagenesis site" description="Strong decrease in both cadaverine excretion and cadaverine uptake." evidence="7">
    <original>Y</original>
    <variation>L</variation>
    <location>
        <position position="423"/>
    </location>
</feature>
<comment type="function">
    <text evidence="3 4">Under acidic conditions, in the presence of lysine, functions as a cadaverine:lysine antiporter that facilitates the excretion of cadaverine and the uptake of lysine (PubMed:14982633, PubMed:1556085). At neutral pH, also catalyzes the uptake of cadaverine via a proton symport mechanism, however the physiological relevance of this uptake activity is probably negligible because the expression of cadB is low at neutral pH (PubMed:14982633). Cadaverine uptake activity is low at acidic pH (PubMed:14982633).</text>
</comment>
<comment type="catalytic activity">
    <reaction evidence="3 12">
        <text>cadaverine(in) + L-lysine(out) = cadaverine(out) + L-lysine(in)</text>
        <dbReference type="Rhea" id="RHEA:28895"/>
        <dbReference type="ChEBI" id="CHEBI:32551"/>
        <dbReference type="ChEBI" id="CHEBI:58384"/>
    </reaction>
    <physiologicalReaction direction="left-to-right" evidence="3 12">
        <dbReference type="Rhea" id="RHEA:28896"/>
    </physiologicalReaction>
</comment>
<comment type="catalytic activity">
    <reaction evidence="3">
        <text>cadaverine(in) + H(+)(in) = cadaverine(out) + H(+)(out)</text>
        <dbReference type="Rhea" id="RHEA:29711"/>
        <dbReference type="ChEBI" id="CHEBI:15378"/>
        <dbReference type="ChEBI" id="CHEBI:58384"/>
    </reaction>
    <physiologicalReaction direction="right-to-left" evidence="3">
        <dbReference type="Rhea" id="RHEA:29713"/>
    </physiologicalReaction>
</comment>
<comment type="activity regulation">
    <text evidence="3">Uptake of cadaverine at neutral pH is greatly inhibited by carbonyl cyanide m-chlorophenylhydrazone (CCCP), which dissipates the proton motive force, valinomycin, which dissipates the membrane potential, and nigericin, which dissipates the transmembrane pH gradient (PubMed:14982633). Cadaverine uptake at neutral pH is also inhibited by putrescine and lysine (PubMed:14982633). Cadaverine-lysine antiporter activity is not inhibited by CCCP (PubMed:14982633).</text>
</comment>
<comment type="biophysicochemical properties">
    <kinetics>
        <KM evidence="3">303 uM for cadaverine (for export activity, at low pH)</KM>
        <KM evidence="7">390 uM for cadaverine (for export activity)</KM>
        <KM evidence="3 7">20.8 uM for cadaverine (for uptake activity, at neutral pH)</KM>
        <Vmax evidence="3">0.313 nmol/min/mg enzyme (for cadaverine export activity, at low pH)</Vmax>
        <Vmax evidence="3">11.8 nmol/min/mg enzyme (for cadaverine uptake activity, at neutral pH)</Vmax>
    </kinetics>
</comment>
<comment type="subcellular location">
    <subcellularLocation>
        <location evidence="5 7">Cell inner membrane</location>
        <topology evidence="1">Multi-pass membrane protein</topology>
    </subcellularLocation>
</comment>
<comment type="induction">
    <text evidence="2 3 6 8 9">Part of the cadB-cadA operon, which is under the control of the Pcad promoter (PubMed:1370290, PubMed:16491024). Expression is regulated by CadC (PubMed:1370290, PubMed:16491024). Highly expressed at acidic pH in the presence of lysine (PubMed:1370290, PubMed:14982633, PubMed:16491024). The global regulator Lrp also has a positive effect on the expression of the cadBA operon when cells are exposed to moderate acidic stress in the presence of lysine (PubMed:21441513). Repressed by H-NS under non-inducing conditions (PubMed:16491024). Repressed at pH 5.6 by OmpR (PubMed:29138484).</text>
</comment>
<comment type="domain">
    <text evidence="7">Amino acid residues involved in both uptake and excretion, or solely in excretion, are located in the cytoplasmic loops and the cytoplasmic side of transmembrane segments, whereas residues involved in uptake are located in the periplasmic loops and the transmembrane segments. The SH-group of Cys-370 seems to be important for both uptake and excretion and may be necessary for recognition of the NH(2)-group of cadaverine.</text>
</comment>
<comment type="disruption phenotype">
    <text evidence="4">Mutant shows reduced amount of cadaverine in the medium.</text>
</comment>
<comment type="similarity">
    <text evidence="11">Belongs to the amino acid-polyamine-organocation (APC) superfamily. Basic amino acid/polyamine antiporter (APA) (TC 2.A.3.2) family.</text>
</comment>
<dbReference type="EMBL" id="M67452">
    <property type="protein sequence ID" value="AAA23532.1"/>
    <property type="molecule type" value="Genomic_DNA"/>
</dbReference>
<dbReference type="EMBL" id="M76411">
    <property type="protein sequence ID" value="AAA23535.1"/>
    <property type="molecule type" value="Genomic_DNA"/>
</dbReference>
<dbReference type="EMBL" id="U14003">
    <property type="protein sequence ID" value="AAA97032.1"/>
    <property type="molecule type" value="Genomic_DNA"/>
</dbReference>
<dbReference type="EMBL" id="U00096">
    <property type="protein sequence ID" value="AAC77093.1"/>
    <property type="molecule type" value="Genomic_DNA"/>
</dbReference>
<dbReference type="EMBL" id="AP009048">
    <property type="protein sequence ID" value="BAE78135.1"/>
    <property type="molecule type" value="Genomic_DNA"/>
</dbReference>
<dbReference type="PIR" id="A41842">
    <property type="entry name" value="A41842"/>
</dbReference>
<dbReference type="RefSeq" id="NP_418556.1">
    <property type="nucleotide sequence ID" value="NC_000913.3"/>
</dbReference>
<dbReference type="RefSeq" id="WP_000092909.1">
    <property type="nucleotide sequence ID" value="NZ_STEB01000014.1"/>
</dbReference>
<dbReference type="SMR" id="P0AAE8"/>
<dbReference type="BioGRID" id="4260780">
    <property type="interactions" value="7"/>
</dbReference>
<dbReference type="DIP" id="DIP-48089N"/>
<dbReference type="FunCoup" id="P0AAE8">
    <property type="interactions" value="74"/>
</dbReference>
<dbReference type="IntAct" id="P0AAE8">
    <property type="interactions" value="2"/>
</dbReference>
<dbReference type="STRING" id="511145.b4132"/>
<dbReference type="TCDB" id="2.A.3.2.2">
    <property type="family name" value="the amino acid-polyamine-organocation (apc) family"/>
</dbReference>
<dbReference type="PaxDb" id="511145-b4132"/>
<dbReference type="EnsemblBacteria" id="AAC77093">
    <property type="protein sequence ID" value="AAC77093"/>
    <property type="gene ID" value="b4132"/>
</dbReference>
<dbReference type="GeneID" id="75203985"/>
<dbReference type="GeneID" id="948654"/>
<dbReference type="KEGG" id="ecj:JW4093"/>
<dbReference type="KEGG" id="eco:b4132"/>
<dbReference type="KEGG" id="ecoc:C3026_22335"/>
<dbReference type="PATRIC" id="fig|1411691.4.peg.2567"/>
<dbReference type="EchoBASE" id="EB0130"/>
<dbReference type="eggNOG" id="COG0531">
    <property type="taxonomic scope" value="Bacteria"/>
</dbReference>
<dbReference type="HOGENOM" id="CLU_007946_1_0_6"/>
<dbReference type="InParanoid" id="P0AAE8"/>
<dbReference type="OMA" id="FAYDGWL"/>
<dbReference type="OrthoDB" id="3185104at2"/>
<dbReference type="PhylomeDB" id="P0AAE8"/>
<dbReference type="BioCyc" id="EcoCyc:CADB-MONOMER"/>
<dbReference type="BioCyc" id="MetaCyc:CADB-MONOMER"/>
<dbReference type="PRO" id="PR:P0AAE8"/>
<dbReference type="Proteomes" id="UP000000625">
    <property type="component" value="Chromosome"/>
</dbReference>
<dbReference type="GO" id="GO:0005886">
    <property type="term" value="C:plasma membrane"/>
    <property type="evidence" value="ECO:0000314"/>
    <property type="project" value="EcoCyc"/>
</dbReference>
<dbReference type="GO" id="GO:0015297">
    <property type="term" value="F:antiporter activity"/>
    <property type="evidence" value="ECO:0000266"/>
    <property type="project" value="EcoCyc"/>
</dbReference>
<dbReference type="GO" id="GO:0043872">
    <property type="term" value="F:lysine:cadaverine antiporter activity"/>
    <property type="evidence" value="ECO:0000314"/>
    <property type="project" value="EcoCyc"/>
</dbReference>
<dbReference type="GO" id="GO:0015293">
    <property type="term" value="F:symporter activity"/>
    <property type="evidence" value="ECO:0007669"/>
    <property type="project" value="UniProtKB-KW"/>
</dbReference>
<dbReference type="GO" id="GO:0015839">
    <property type="term" value="P:cadaverine transport"/>
    <property type="evidence" value="ECO:0000314"/>
    <property type="project" value="EcoCyc"/>
</dbReference>
<dbReference type="GO" id="GO:1990451">
    <property type="term" value="P:cellular stress response to acidic pH"/>
    <property type="evidence" value="ECO:0000270"/>
    <property type="project" value="EcoCyc"/>
</dbReference>
<dbReference type="GO" id="GO:1903401">
    <property type="term" value="P:L-lysine transmembrane transport"/>
    <property type="evidence" value="ECO:0000314"/>
    <property type="project" value="EcoCyc"/>
</dbReference>
<dbReference type="FunFam" id="1.20.1740.10:FF:000020">
    <property type="entry name" value="Putative cadaverine/lysine antiporter CadB"/>
    <property type="match status" value="1"/>
</dbReference>
<dbReference type="Gene3D" id="1.20.1740.10">
    <property type="entry name" value="Amino acid/polyamine transporter I"/>
    <property type="match status" value="1"/>
</dbReference>
<dbReference type="InterPro" id="IPR002293">
    <property type="entry name" value="AA/rel_permease1"/>
</dbReference>
<dbReference type="InterPro" id="IPR004754">
    <property type="entry name" value="Amino_acid_antiprt"/>
</dbReference>
<dbReference type="InterPro" id="IPR050367">
    <property type="entry name" value="APC_superfamily"/>
</dbReference>
<dbReference type="NCBIfam" id="TIGR00905">
    <property type="entry name" value="2A0302"/>
    <property type="match status" value="1"/>
</dbReference>
<dbReference type="NCBIfam" id="NF007754">
    <property type="entry name" value="PRK10435.1"/>
    <property type="match status" value="1"/>
</dbReference>
<dbReference type="PANTHER" id="PTHR42770">
    <property type="entry name" value="AMINO ACID TRANSPORTER-RELATED"/>
    <property type="match status" value="1"/>
</dbReference>
<dbReference type="PANTHER" id="PTHR42770:SF5">
    <property type="entry name" value="CADAVERINE_LYSINE ANTIPORTER"/>
    <property type="match status" value="1"/>
</dbReference>
<dbReference type="Pfam" id="PF13520">
    <property type="entry name" value="AA_permease_2"/>
    <property type="match status" value="1"/>
</dbReference>
<dbReference type="PIRSF" id="PIRSF006060">
    <property type="entry name" value="AA_transporter"/>
    <property type="match status" value="1"/>
</dbReference>
<protein>
    <recommendedName>
        <fullName evidence="11">Cadaverine/lysine antiporter</fullName>
    </recommendedName>
</protein>
<proteinExistence type="evidence at protein level"/>
<reference key="1">
    <citation type="journal article" date="1992" name="J. Bacteriol.">
        <title>Identification of elements involved in transcriptional regulation of the Escherichia coli cad operon by external pH.</title>
        <authorList>
            <person name="Watson N."/>
            <person name="Dunyak D.S."/>
            <person name="Rosey E.L."/>
            <person name="Slonczewski J.L."/>
            <person name="Olson E.R."/>
        </authorList>
    </citation>
    <scope>NUCLEOTIDE SEQUENCE [GENOMIC DNA]</scope>
    <scope>INDUCTION</scope>
    <source>
        <strain>JLS821</strain>
    </source>
</reference>
<reference key="2">
    <citation type="journal article" date="1992" name="J. Bacteriol.">
        <title>Nucleotide sequence of the Escherichia coli cad operon: a system for neutralization of low extracellular pH.</title>
        <authorList>
            <person name="Meng S.-Y."/>
            <person name="Bennett G.N."/>
        </authorList>
    </citation>
    <scope>NUCLEOTIDE SEQUENCE [GENOMIC DNA]</scope>
    <scope>FUNCTION</scope>
    <scope>DISRUPTION PHENOTYPE</scope>
</reference>
<reference key="3">
    <citation type="journal article" date="1995" name="Nucleic Acids Res.">
        <title>Analysis of the Escherichia coli genome VI: DNA sequence of the region from 92.8 through 100 minutes.</title>
        <authorList>
            <person name="Burland V.D."/>
            <person name="Plunkett G. III"/>
            <person name="Sofia H.J."/>
            <person name="Daniels D.L."/>
            <person name="Blattner F.R."/>
        </authorList>
    </citation>
    <scope>NUCLEOTIDE SEQUENCE [LARGE SCALE GENOMIC DNA]</scope>
    <source>
        <strain>K12 / MG1655 / ATCC 47076</strain>
    </source>
</reference>
<reference key="4">
    <citation type="journal article" date="1997" name="Science">
        <title>The complete genome sequence of Escherichia coli K-12.</title>
        <authorList>
            <person name="Blattner F.R."/>
            <person name="Plunkett G. III"/>
            <person name="Bloch C.A."/>
            <person name="Perna N.T."/>
            <person name="Burland V."/>
            <person name="Riley M."/>
            <person name="Collado-Vides J."/>
            <person name="Glasner J.D."/>
            <person name="Rode C.K."/>
            <person name="Mayhew G.F."/>
            <person name="Gregor J."/>
            <person name="Davis N.W."/>
            <person name="Kirkpatrick H.A."/>
            <person name="Goeden M.A."/>
            <person name="Rose D.J."/>
            <person name="Mau B."/>
            <person name="Shao Y."/>
        </authorList>
    </citation>
    <scope>NUCLEOTIDE SEQUENCE [LARGE SCALE GENOMIC DNA]</scope>
    <source>
        <strain>K12 / MG1655 / ATCC 47076</strain>
    </source>
</reference>
<reference key="5">
    <citation type="journal article" date="2006" name="Mol. Syst. Biol.">
        <title>Highly accurate genome sequences of Escherichia coli K-12 strains MG1655 and W3110.</title>
        <authorList>
            <person name="Hayashi K."/>
            <person name="Morooka N."/>
            <person name="Yamamoto Y."/>
            <person name="Fujita K."/>
            <person name="Isono K."/>
            <person name="Choi S."/>
            <person name="Ohtsubo E."/>
            <person name="Baba T."/>
            <person name="Wanner B.L."/>
            <person name="Mori H."/>
            <person name="Horiuchi T."/>
        </authorList>
    </citation>
    <scope>NUCLEOTIDE SEQUENCE [LARGE SCALE GENOMIC DNA]</scope>
    <source>
        <strain>K12 / W3110 / ATCC 27325 / DSM 5911</strain>
    </source>
</reference>
<reference key="6">
    <citation type="journal article" date="2004" name="Mol. Microbiol.">
        <title>Excretion and uptake of cadaverine by CadB and its physiological functions in Escherichia coli.</title>
        <authorList>
            <person name="Soksawatmaekhin W."/>
            <person name="Kuraishi A."/>
            <person name="Sakata K."/>
            <person name="Kashiwagi K."/>
            <person name="Igarashi K."/>
        </authorList>
    </citation>
    <scope>FUNCTION</scope>
    <scope>CATALYTIC ACTIVITY</scope>
    <scope>ACTIVITY REGULATION</scope>
    <scope>BIOPHYSICOCHEMICAL PROPERTIES</scope>
    <scope>INDUCTION</scope>
</reference>
<reference key="7">
    <citation type="journal article" date="2005" name="J. Mol. Microbiol. Biotechnol.">
        <title>CadC-mediated activation of the cadBA promoter in Escherichia coli.</title>
        <authorList>
            <person name="Kuper C."/>
            <person name="Jung K."/>
        </authorList>
    </citation>
    <scope>INDUCTION</scope>
</reference>
<reference key="8">
    <citation type="journal article" date="2005" name="Science">
        <title>Global topology analysis of the Escherichia coli inner membrane proteome.</title>
        <authorList>
            <person name="Daley D.O."/>
            <person name="Rapp M."/>
            <person name="Granseth E."/>
            <person name="Melen K."/>
            <person name="Drew D."/>
            <person name="von Heijne G."/>
        </authorList>
    </citation>
    <scope>SUBCELLULAR LOCATION</scope>
    <scope>TOPOLOGY</scope>
    <source>
        <strain>K12 / MG1655 / ATCC 47076</strain>
    </source>
</reference>
<reference key="9">
    <citation type="journal article" date="2006" name="J. Biol. Chem.">
        <title>Identification of the cadaverine recognition site on the cadaverine-lysine antiporter CadB.</title>
        <authorList>
            <person name="Soksawatmaekhin W."/>
            <person name="Uemura T."/>
            <person name="Fukiwake N."/>
            <person name="Kashiwagi K."/>
            <person name="Igarashi K."/>
        </authorList>
    </citation>
    <scope>BIOPHYSICOCHEMICAL PROPERTIES</scope>
    <scope>SUBCELLULAR LOCATION</scope>
    <scope>TOPOLOGY</scope>
    <scope>DOMAIN</scope>
    <scope>MUTAGENESIS OF CYS-12; TRP-41; TRP-43; TYR-55; TYR-57; TYR-73; GLU-76; TYR-89; TYR-90; TYR-107; CYS-125; TYR-174; ASP-185; CYS-196; GLU-204; TYR-235; TYR-246; CYS-282; ARG-299; ASP-303; TYR-310; TYR-366; TYR-368; CYS-370; GLU-377; CYS-389; CYS-394; CYS-397; GLU-408 AND TYR-423</scope>
</reference>
<reference key="10">
    <citation type="journal article" date="2011" name="J. Bacteriol.">
        <title>Identification of ArgP and Lrp as transcriptional regulators of lysP, the gene encoding the specific lysine permease of Escherichia coli.</title>
        <authorList>
            <person name="Ruiz J."/>
            <person name="Haneburger I."/>
            <person name="Jung K."/>
        </authorList>
    </citation>
    <scope>TRANSCRIPTIONAL REGULATION BY LRP</scope>
    <source>
        <strain>K12 / MG1655 / ATCC 47076</strain>
    </source>
</reference>
<reference key="11">
    <citation type="journal article" date="2012" name="Amino Acids">
        <title>Structure and function of polyamine-amino acid antiporters CadB and PotE in Escherichia coli.</title>
        <authorList>
            <person name="Tomitori H."/>
            <person name="Kashiwagi K."/>
            <person name="Igarashi K."/>
        </authorList>
    </citation>
    <scope>REVIEW</scope>
</reference>
<reference key="12">
    <citation type="journal article" date="2017" name="Nat. Commun.">
        <title>Non-canonical activation of OmpR drives acid and osmotic stress responses in single bacterial cells.</title>
        <authorList>
            <person name="Chakraborty S."/>
            <person name="Winardhi R.S."/>
            <person name="Morgan L.K."/>
            <person name="Yan J."/>
            <person name="Kenney L.J."/>
        </authorList>
    </citation>
    <scope>INDUCTION</scope>
    <source>
        <strain>K12 / MG1655 / ATCC 47076</strain>
    </source>
</reference>